<accession>P9WH66</accession>
<accession>L0T682</accession>
<accession>O08117</accession>
<accession>P0A5X0</accession>
<accession>P95048</accession>
<reference key="1">
    <citation type="journal article" date="2002" name="J. Bacteriol.">
        <title>Whole-genome comparison of Mycobacterium tuberculosis clinical and laboratory strains.</title>
        <authorList>
            <person name="Fleischmann R.D."/>
            <person name="Alland D."/>
            <person name="Eisen J.A."/>
            <person name="Carpenter L."/>
            <person name="White O."/>
            <person name="Peterson J.D."/>
            <person name="DeBoy R.T."/>
            <person name="Dodson R.J."/>
            <person name="Gwinn M.L."/>
            <person name="Haft D.H."/>
            <person name="Hickey E.K."/>
            <person name="Kolonay J.F."/>
            <person name="Nelson W.C."/>
            <person name="Umayam L.A."/>
            <person name="Ermolaeva M.D."/>
            <person name="Salzberg S.L."/>
            <person name="Delcher A."/>
            <person name="Utterback T.R."/>
            <person name="Weidman J.F."/>
            <person name="Khouri H.M."/>
            <person name="Gill J."/>
            <person name="Mikula A."/>
            <person name="Bishai W."/>
            <person name="Jacobs W.R. Jr."/>
            <person name="Venter J.C."/>
            <person name="Fraser C.M."/>
        </authorList>
    </citation>
    <scope>NUCLEOTIDE SEQUENCE [LARGE SCALE GENOMIC DNA]</scope>
    <source>
        <strain>CDC 1551 / Oshkosh</strain>
    </source>
</reference>
<sequence length="101" mass="11431">MAGQKIRIRLKAYDHEAIDASARKIVETVVRTGASVVGPVPLPTEKNVYCVIRSPHKYKDSREHFEMRTHKRLIDIIDPTPKTVDALMRIDLPASVDVNIQ</sequence>
<organism>
    <name type="scientific">Mycobacterium tuberculosis (strain CDC 1551 / Oshkosh)</name>
    <dbReference type="NCBI Taxonomy" id="83331"/>
    <lineage>
        <taxon>Bacteria</taxon>
        <taxon>Bacillati</taxon>
        <taxon>Actinomycetota</taxon>
        <taxon>Actinomycetes</taxon>
        <taxon>Mycobacteriales</taxon>
        <taxon>Mycobacteriaceae</taxon>
        <taxon>Mycobacterium</taxon>
        <taxon>Mycobacterium tuberculosis complex</taxon>
    </lineage>
</organism>
<evidence type="ECO:0000255" key="1">
    <source>
        <dbReference type="HAMAP-Rule" id="MF_00508"/>
    </source>
</evidence>
<evidence type="ECO:0000305" key="2"/>
<dbReference type="EMBL" id="AE000516">
    <property type="protein sequence ID" value="AAK44958.1"/>
    <property type="molecule type" value="Genomic_DNA"/>
</dbReference>
<dbReference type="PIR" id="G70641">
    <property type="entry name" value="G70641"/>
</dbReference>
<dbReference type="RefSeq" id="WP_003403578.1">
    <property type="nucleotide sequence ID" value="NZ_KK341227.1"/>
</dbReference>
<dbReference type="SMR" id="P9WH66"/>
<dbReference type="GeneID" id="93438601"/>
<dbReference type="KEGG" id="mtc:MT0727"/>
<dbReference type="PATRIC" id="fig|83331.31.peg.777"/>
<dbReference type="HOGENOM" id="CLU_122625_1_3_11"/>
<dbReference type="Proteomes" id="UP000001020">
    <property type="component" value="Chromosome"/>
</dbReference>
<dbReference type="GO" id="GO:1990904">
    <property type="term" value="C:ribonucleoprotein complex"/>
    <property type="evidence" value="ECO:0007669"/>
    <property type="project" value="UniProtKB-KW"/>
</dbReference>
<dbReference type="GO" id="GO:0005840">
    <property type="term" value="C:ribosome"/>
    <property type="evidence" value="ECO:0007669"/>
    <property type="project" value="UniProtKB-KW"/>
</dbReference>
<dbReference type="GO" id="GO:0003735">
    <property type="term" value="F:structural constituent of ribosome"/>
    <property type="evidence" value="ECO:0007669"/>
    <property type="project" value="InterPro"/>
</dbReference>
<dbReference type="GO" id="GO:0000049">
    <property type="term" value="F:tRNA binding"/>
    <property type="evidence" value="ECO:0007669"/>
    <property type="project" value="UniProtKB-UniRule"/>
</dbReference>
<dbReference type="GO" id="GO:0006412">
    <property type="term" value="P:translation"/>
    <property type="evidence" value="ECO:0007669"/>
    <property type="project" value="UniProtKB-UniRule"/>
</dbReference>
<dbReference type="FunFam" id="3.30.70.600:FF:000001">
    <property type="entry name" value="30S ribosomal protein S10"/>
    <property type="match status" value="1"/>
</dbReference>
<dbReference type="Gene3D" id="3.30.70.600">
    <property type="entry name" value="Ribosomal protein S10 domain"/>
    <property type="match status" value="1"/>
</dbReference>
<dbReference type="HAMAP" id="MF_00508">
    <property type="entry name" value="Ribosomal_uS10"/>
    <property type="match status" value="1"/>
</dbReference>
<dbReference type="InterPro" id="IPR001848">
    <property type="entry name" value="Ribosomal_uS10"/>
</dbReference>
<dbReference type="InterPro" id="IPR018268">
    <property type="entry name" value="Ribosomal_uS10_CS"/>
</dbReference>
<dbReference type="InterPro" id="IPR027486">
    <property type="entry name" value="Ribosomal_uS10_dom"/>
</dbReference>
<dbReference type="InterPro" id="IPR036838">
    <property type="entry name" value="Ribosomal_uS10_dom_sf"/>
</dbReference>
<dbReference type="NCBIfam" id="NF001861">
    <property type="entry name" value="PRK00596.1"/>
    <property type="match status" value="1"/>
</dbReference>
<dbReference type="NCBIfam" id="TIGR01049">
    <property type="entry name" value="rpsJ_bact"/>
    <property type="match status" value="1"/>
</dbReference>
<dbReference type="PANTHER" id="PTHR11700">
    <property type="entry name" value="30S RIBOSOMAL PROTEIN S10 FAMILY MEMBER"/>
    <property type="match status" value="1"/>
</dbReference>
<dbReference type="Pfam" id="PF00338">
    <property type="entry name" value="Ribosomal_S10"/>
    <property type="match status" value="1"/>
</dbReference>
<dbReference type="PRINTS" id="PR00971">
    <property type="entry name" value="RIBOSOMALS10"/>
</dbReference>
<dbReference type="SMART" id="SM01403">
    <property type="entry name" value="Ribosomal_S10"/>
    <property type="match status" value="1"/>
</dbReference>
<dbReference type="SUPFAM" id="SSF54999">
    <property type="entry name" value="Ribosomal protein S10"/>
    <property type="match status" value="1"/>
</dbReference>
<dbReference type="PROSITE" id="PS00361">
    <property type="entry name" value="RIBOSOMAL_S10"/>
    <property type="match status" value="1"/>
</dbReference>
<keyword id="KW-1185">Reference proteome</keyword>
<keyword id="KW-0687">Ribonucleoprotein</keyword>
<keyword id="KW-0689">Ribosomal protein</keyword>
<gene>
    <name evidence="1" type="primary">rpsJ</name>
    <name type="synonym">rpsX</name>
    <name type="ordered locus">MT0727</name>
</gene>
<protein>
    <recommendedName>
        <fullName evidence="1">Small ribosomal subunit protein uS10</fullName>
    </recommendedName>
    <alternativeName>
        <fullName evidence="2">30S ribosomal protein S10</fullName>
    </alternativeName>
</protein>
<proteinExistence type="inferred from homology"/>
<comment type="function">
    <text evidence="1">Involved in the binding of tRNA to the ribosomes.</text>
</comment>
<comment type="subunit">
    <text evidence="1">Part of the 30S ribosomal subunit.</text>
</comment>
<comment type="similarity">
    <text evidence="1">Belongs to the universal ribosomal protein uS10 family.</text>
</comment>
<feature type="chain" id="PRO_0000428240" description="Small ribosomal subunit protein uS10">
    <location>
        <begin position="1"/>
        <end position="101"/>
    </location>
</feature>
<name>RS10_MYCTO</name>